<evidence type="ECO:0000305" key="1"/>
<organism>
    <name type="scientific">Neisseria meningitidis serogroup A / serotype 4A (strain DSM 15465 / Z2491)</name>
    <dbReference type="NCBI Taxonomy" id="122587"/>
    <lineage>
        <taxon>Bacteria</taxon>
        <taxon>Pseudomonadati</taxon>
        <taxon>Pseudomonadota</taxon>
        <taxon>Betaproteobacteria</taxon>
        <taxon>Neisseriales</taxon>
        <taxon>Neisseriaceae</taxon>
        <taxon>Neisseria</taxon>
    </lineage>
</organism>
<protein>
    <recommendedName>
        <fullName>Capsule polysaccharide modification protein LipA</fullName>
    </recommendedName>
</protein>
<proteinExistence type="predicted"/>
<gene>
    <name type="primary">lipA</name>
    <name type="ordered locus">NMA0186</name>
</gene>
<dbReference type="EMBL" id="AL157959">
    <property type="protein sequence ID" value="CAM07501.1"/>
    <property type="molecule type" value="Genomic_DNA"/>
</dbReference>
<dbReference type="PIR" id="H82012">
    <property type="entry name" value="H82012"/>
</dbReference>
<dbReference type="RefSeq" id="WP_002246741.1">
    <property type="nucleotide sequence ID" value="NC_003116.1"/>
</dbReference>
<dbReference type="SMR" id="P57037"/>
<dbReference type="EnsemblBacteria" id="CAM07501">
    <property type="protein sequence ID" value="CAM07501"/>
    <property type="gene ID" value="NMA0186"/>
</dbReference>
<dbReference type="KEGG" id="nma:NMA0186"/>
<dbReference type="HOGENOM" id="CLU_025998_0_0_4"/>
<dbReference type="Proteomes" id="UP000000626">
    <property type="component" value="Chromosome"/>
</dbReference>
<dbReference type="GO" id="GO:0005886">
    <property type="term" value="C:plasma membrane"/>
    <property type="evidence" value="ECO:0007669"/>
    <property type="project" value="UniProtKB-SubCell"/>
</dbReference>
<dbReference type="GO" id="GO:0000271">
    <property type="term" value="P:polysaccharide biosynthetic process"/>
    <property type="evidence" value="ECO:0007669"/>
    <property type="project" value="InterPro"/>
</dbReference>
<dbReference type="GO" id="GO:0015774">
    <property type="term" value="P:polysaccharide transport"/>
    <property type="evidence" value="ECO:0007669"/>
    <property type="project" value="UniProtKB-KW"/>
</dbReference>
<dbReference type="CDD" id="cd16440">
    <property type="entry name" value="beta_Kdo_transferase_KpsC_1"/>
    <property type="match status" value="1"/>
</dbReference>
<dbReference type="CDD" id="cd16439">
    <property type="entry name" value="beta_Kdo_transferase_KpsC_2"/>
    <property type="match status" value="1"/>
</dbReference>
<dbReference type="InterPro" id="IPR007833">
    <property type="entry name" value="Capsule_polysaccharide_synth"/>
</dbReference>
<dbReference type="Pfam" id="PF05159">
    <property type="entry name" value="Capsule_synth"/>
    <property type="match status" value="2"/>
</dbReference>
<reference key="1">
    <citation type="journal article" date="2000" name="Nature">
        <title>Complete DNA sequence of a serogroup A strain of Neisseria meningitidis Z2491.</title>
        <authorList>
            <person name="Parkhill J."/>
            <person name="Achtman M."/>
            <person name="James K.D."/>
            <person name="Bentley S.D."/>
            <person name="Churcher C.M."/>
            <person name="Klee S.R."/>
            <person name="Morelli G."/>
            <person name="Basham D."/>
            <person name="Brown D."/>
            <person name="Chillingworth T."/>
            <person name="Davies R.M."/>
            <person name="Davis P."/>
            <person name="Devlin K."/>
            <person name="Feltwell T."/>
            <person name="Hamlin N."/>
            <person name="Holroyd S."/>
            <person name="Jagels K."/>
            <person name="Leather S."/>
            <person name="Moule S."/>
            <person name="Mungall K.L."/>
            <person name="Quail M.A."/>
            <person name="Rajandream M.A."/>
            <person name="Rutherford K.M."/>
            <person name="Simmonds M."/>
            <person name="Skelton J."/>
            <person name="Whitehead S."/>
            <person name="Spratt B.G."/>
            <person name="Barrell B.G."/>
        </authorList>
    </citation>
    <scope>NUCLEOTIDE SEQUENCE [LARGE SCALE GENOMIC DNA]</scope>
    <source>
        <strain>DSM 15465 / Z2491</strain>
    </source>
</reference>
<comment type="function">
    <text>Involved in the phospholipid modification of the capsular polysaccharide, a strong requirement for its translocation to the cell surface.</text>
</comment>
<comment type="subcellular location">
    <subcellularLocation>
        <location evidence="1">Cell inner membrane</location>
        <topology evidence="1">Peripheral membrane protein</topology>
        <orientation evidence="1">Cytoplasmic side</orientation>
    </subcellularLocation>
</comment>
<accession>P57037</accession>
<accession>A1IP43</accession>
<keyword id="KW-0997">Cell inner membrane</keyword>
<keyword id="KW-1003">Cell membrane</keyword>
<keyword id="KW-0472">Membrane</keyword>
<keyword id="KW-0625">Polysaccharide transport</keyword>
<keyword id="KW-0762">Sugar transport</keyword>
<keyword id="KW-0813">Transport</keyword>
<feature type="chain" id="PRO_0000084438" description="Capsule polysaccharide modification protein LipA">
    <location>
        <begin position="1"/>
        <end position="704"/>
    </location>
</feature>
<sequence>MFLFSDGLQSINNNNRRKRIVKNAYIPSRGIRKIPHLSTLLPEFHIYKDGKGAEAVVGWGLRPTTHKARAFATEHQLPFIALEDGFLRSLGLGVSGYPPYSIVYDDIGIYYDTTRPSRLEQLILAADTMPSETLAQARQAMDFILQHHLSKYNHAPELSDDHPLRSPSKSETVLIIDQTFGDMAIQYGGADASTFELMFQTALNENPQADIWVKTHPDVLCGKKQGYLTQLVQQHRVHLLAEDINPISLLQNVDKVYCVTSQMGFEALLCGKPLTTFGLPWYAGWGVSDDRHPKIGSLIQTQRRAPRNLLQLFAAAYLQYSRYLNPNTGEAGSLFDVIDYLATVKRKNDKLRGELYCVGMSLWKRAVAKPFFNVPSCRLKFISSTQKLARVKLSDDARILAWGNGKEAIVRFAEQHHIPLLRMEDGFIRSVGLGSNLVPPLSLVTDDMSIYFNAETPSRLEYILQNQNFDDQDFQTALKLQKMLTENHISKYNVGSSDFTAPSTDKTVILVPGQVEDDASIRYGSPQIYRNLDLLRTVRERNPNAYIIYKPHPDVVSGNRIGHISPDDAARYADQTAEQADILTCLQYADEIHTMTSLTGFEALLRGKKVSCYGLPFYAGWGLTQDLLPIPRRSRRLELWQLVAGTLIYYPDYIHPKTHQAINAETAAQILIRQKNMQKNNNGLHRGCFAKKLGKIKQLYRSFK</sequence>
<name>LIPM_NEIMA</name>